<keyword id="KW-0007">Acetylation</keyword>
<keyword id="KW-0029">Amino-acid transport</keyword>
<keyword id="KW-0325">Glycoprotein</keyword>
<keyword id="KW-0472">Membrane</keyword>
<keyword id="KW-1185">Reference proteome</keyword>
<keyword id="KW-0812">Transmembrane</keyword>
<keyword id="KW-1133">Transmembrane helix</keyword>
<keyword id="KW-0813">Transport</keyword>
<gene>
    <name type="primary">CAT1</name>
    <name type="synonym">AAT1</name>
    <name type="ordered locus">At4g21120</name>
    <name type="ORF">F7J7.60</name>
</gene>
<reference key="1">
    <citation type="journal article" date="1999" name="Nature">
        <title>Sequence and analysis of chromosome 4 of the plant Arabidopsis thaliana.</title>
        <authorList>
            <person name="Mayer K.F.X."/>
            <person name="Schueller C."/>
            <person name="Wambutt R."/>
            <person name="Murphy G."/>
            <person name="Volckaert G."/>
            <person name="Pohl T."/>
            <person name="Duesterhoeft A."/>
            <person name="Stiekema W."/>
            <person name="Entian K.-D."/>
            <person name="Terryn N."/>
            <person name="Harris B."/>
            <person name="Ansorge W."/>
            <person name="Brandt P."/>
            <person name="Grivell L.A."/>
            <person name="Rieger M."/>
            <person name="Weichselgartner M."/>
            <person name="de Simone V."/>
            <person name="Obermaier B."/>
            <person name="Mache R."/>
            <person name="Mueller M."/>
            <person name="Kreis M."/>
            <person name="Delseny M."/>
            <person name="Puigdomenech P."/>
            <person name="Watson M."/>
            <person name="Schmidtheini T."/>
            <person name="Reichert B."/>
            <person name="Portetelle D."/>
            <person name="Perez-Alonso M."/>
            <person name="Boutry M."/>
            <person name="Bancroft I."/>
            <person name="Vos P."/>
            <person name="Hoheisel J."/>
            <person name="Zimmermann W."/>
            <person name="Wedler H."/>
            <person name="Ridley P."/>
            <person name="Langham S.-A."/>
            <person name="McCullagh B."/>
            <person name="Bilham L."/>
            <person name="Robben J."/>
            <person name="van der Schueren J."/>
            <person name="Grymonprez B."/>
            <person name="Chuang Y.-J."/>
            <person name="Vandenbussche F."/>
            <person name="Braeken M."/>
            <person name="Weltjens I."/>
            <person name="Voet M."/>
            <person name="Bastiaens I."/>
            <person name="Aert R."/>
            <person name="Defoor E."/>
            <person name="Weitzenegger T."/>
            <person name="Bothe G."/>
            <person name="Ramsperger U."/>
            <person name="Hilbert H."/>
            <person name="Braun M."/>
            <person name="Holzer E."/>
            <person name="Brandt A."/>
            <person name="Peters S."/>
            <person name="van Staveren M."/>
            <person name="Dirkse W."/>
            <person name="Mooijman P."/>
            <person name="Klein Lankhorst R."/>
            <person name="Rose M."/>
            <person name="Hauf J."/>
            <person name="Koetter P."/>
            <person name="Berneiser S."/>
            <person name="Hempel S."/>
            <person name="Feldpausch M."/>
            <person name="Lamberth S."/>
            <person name="Van den Daele H."/>
            <person name="De Keyser A."/>
            <person name="Buysshaert C."/>
            <person name="Gielen J."/>
            <person name="Villarroel R."/>
            <person name="De Clercq R."/>
            <person name="van Montagu M."/>
            <person name="Rogers J."/>
            <person name="Cronin A."/>
            <person name="Quail M.A."/>
            <person name="Bray-Allen S."/>
            <person name="Clark L."/>
            <person name="Doggett J."/>
            <person name="Hall S."/>
            <person name="Kay M."/>
            <person name="Lennard N."/>
            <person name="McLay K."/>
            <person name="Mayes R."/>
            <person name="Pettett A."/>
            <person name="Rajandream M.A."/>
            <person name="Lyne M."/>
            <person name="Benes V."/>
            <person name="Rechmann S."/>
            <person name="Borkova D."/>
            <person name="Bloecker H."/>
            <person name="Scharfe M."/>
            <person name="Grimm M."/>
            <person name="Loehnert T.-H."/>
            <person name="Dose S."/>
            <person name="de Haan M."/>
            <person name="Maarse A.C."/>
            <person name="Schaefer M."/>
            <person name="Mueller-Auer S."/>
            <person name="Gabel C."/>
            <person name="Fuchs M."/>
            <person name="Fartmann B."/>
            <person name="Granderath K."/>
            <person name="Dauner D."/>
            <person name="Herzl A."/>
            <person name="Neumann S."/>
            <person name="Argiriou A."/>
            <person name="Vitale D."/>
            <person name="Liguori R."/>
            <person name="Piravandi E."/>
            <person name="Massenet O."/>
            <person name="Quigley F."/>
            <person name="Clabauld G."/>
            <person name="Muendlein A."/>
            <person name="Felber R."/>
            <person name="Schnabl S."/>
            <person name="Hiller R."/>
            <person name="Schmidt W."/>
            <person name="Lecharny A."/>
            <person name="Aubourg S."/>
            <person name="Chefdor F."/>
            <person name="Cooke R."/>
            <person name="Berger C."/>
            <person name="Monfort A."/>
            <person name="Casacuberta E."/>
            <person name="Gibbons T."/>
            <person name="Weber N."/>
            <person name="Vandenbol M."/>
            <person name="Bargues M."/>
            <person name="Terol J."/>
            <person name="Torres A."/>
            <person name="Perez-Perez A."/>
            <person name="Purnelle B."/>
            <person name="Bent E."/>
            <person name="Johnson S."/>
            <person name="Tacon D."/>
            <person name="Jesse T."/>
            <person name="Heijnen L."/>
            <person name="Schwarz S."/>
            <person name="Scholler P."/>
            <person name="Heber S."/>
            <person name="Francs P."/>
            <person name="Bielke C."/>
            <person name="Frishman D."/>
            <person name="Haase D."/>
            <person name="Lemcke K."/>
            <person name="Mewes H.-W."/>
            <person name="Stocker S."/>
            <person name="Zaccaria P."/>
            <person name="Bevan M."/>
            <person name="Wilson R.K."/>
            <person name="de la Bastide M."/>
            <person name="Habermann K."/>
            <person name="Parnell L."/>
            <person name="Dedhia N."/>
            <person name="Gnoj L."/>
            <person name="Schutz K."/>
            <person name="Huang E."/>
            <person name="Spiegel L."/>
            <person name="Sekhon M."/>
            <person name="Murray J."/>
            <person name="Sheet P."/>
            <person name="Cordes M."/>
            <person name="Abu-Threideh J."/>
            <person name="Stoneking T."/>
            <person name="Kalicki J."/>
            <person name="Graves T."/>
            <person name="Harmon G."/>
            <person name="Edwards J."/>
            <person name="Latreille P."/>
            <person name="Courtney L."/>
            <person name="Cloud J."/>
            <person name="Abbott A."/>
            <person name="Scott K."/>
            <person name="Johnson D."/>
            <person name="Minx P."/>
            <person name="Bentley D."/>
            <person name="Fulton B."/>
            <person name="Miller N."/>
            <person name="Greco T."/>
            <person name="Kemp K."/>
            <person name="Kramer J."/>
            <person name="Fulton L."/>
            <person name="Mardis E."/>
            <person name="Dante M."/>
            <person name="Pepin K."/>
            <person name="Hillier L.W."/>
            <person name="Nelson J."/>
            <person name="Spieth J."/>
            <person name="Ryan E."/>
            <person name="Andrews S."/>
            <person name="Geisel C."/>
            <person name="Layman D."/>
            <person name="Du H."/>
            <person name="Ali J."/>
            <person name="Berghoff A."/>
            <person name="Jones K."/>
            <person name="Drone K."/>
            <person name="Cotton M."/>
            <person name="Joshu C."/>
            <person name="Antonoiu B."/>
            <person name="Zidanic M."/>
            <person name="Strong C."/>
            <person name="Sun H."/>
            <person name="Lamar B."/>
            <person name="Yordan C."/>
            <person name="Ma P."/>
            <person name="Zhong J."/>
            <person name="Preston R."/>
            <person name="Vil D."/>
            <person name="Shekher M."/>
            <person name="Matero A."/>
            <person name="Shah R."/>
            <person name="Swaby I.K."/>
            <person name="O'Shaughnessy A."/>
            <person name="Rodriguez M."/>
            <person name="Hoffman J."/>
            <person name="Till S."/>
            <person name="Granat S."/>
            <person name="Shohdy N."/>
            <person name="Hasegawa A."/>
            <person name="Hameed A."/>
            <person name="Lodhi M."/>
            <person name="Johnson A."/>
            <person name="Chen E."/>
            <person name="Marra M.A."/>
            <person name="Martienssen R."/>
            <person name="McCombie W.R."/>
        </authorList>
    </citation>
    <scope>NUCLEOTIDE SEQUENCE [LARGE SCALE GENOMIC DNA]</scope>
    <source>
        <strain>cv. Columbia</strain>
    </source>
</reference>
<reference key="2">
    <citation type="journal article" date="2017" name="Plant J.">
        <title>Araport11: a complete reannotation of the Arabidopsis thaliana reference genome.</title>
        <authorList>
            <person name="Cheng C.Y."/>
            <person name="Krishnakumar V."/>
            <person name="Chan A.P."/>
            <person name="Thibaud-Nissen F."/>
            <person name="Schobel S."/>
            <person name="Town C.D."/>
        </authorList>
    </citation>
    <scope>GENOME REANNOTATION</scope>
    <source>
        <strain>cv. Columbia</strain>
    </source>
</reference>
<reference key="3">
    <citation type="journal article" date="2003" name="Science">
        <title>Empirical analysis of transcriptional activity in the Arabidopsis genome.</title>
        <authorList>
            <person name="Yamada K."/>
            <person name="Lim J."/>
            <person name="Dale J.M."/>
            <person name="Chen H."/>
            <person name="Shinn P."/>
            <person name="Palm C.J."/>
            <person name="Southwick A.M."/>
            <person name="Wu H.C."/>
            <person name="Kim C.J."/>
            <person name="Nguyen M."/>
            <person name="Pham P.K."/>
            <person name="Cheuk R.F."/>
            <person name="Karlin-Newmann G."/>
            <person name="Liu S.X."/>
            <person name="Lam B."/>
            <person name="Sakano H."/>
            <person name="Wu T."/>
            <person name="Yu G."/>
            <person name="Miranda M."/>
            <person name="Quach H.L."/>
            <person name="Tripp M."/>
            <person name="Chang C.H."/>
            <person name="Lee J.M."/>
            <person name="Toriumi M.J."/>
            <person name="Chan M.M."/>
            <person name="Tang C.C."/>
            <person name="Onodera C.S."/>
            <person name="Deng J.M."/>
            <person name="Akiyama K."/>
            <person name="Ansari Y."/>
            <person name="Arakawa T."/>
            <person name="Banh J."/>
            <person name="Banno F."/>
            <person name="Bowser L."/>
            <person name="Brooks S.Y."/>
            <person name="Carninci P."/>
            <person name="Chao Q."/>
            <person name="Choy N."/>
            <person name="Enju A."/>
            <person name="Goldsmith A.D."/>
            <person name="Gurjal M."/>
            <person name="Hansen N.F."/>
            <person name="Hayashizaki Y."/>
            <person name="Johnson-Hopson C."/>
            <person name="Hsuan V.W."/>
            <person name="Iida K."/>
            <person name="Karnes M."/>
            <person name="Khan S."/>
            <person name="Koesema E."/>
            <person name="Ishida J."/>
            <person name="Jiang P.X."/>
            <person name="Jones T."/>
            <person name="Kawai J."/>
            <person name="Kamiya A."/>
            <person name="Meyers C."/>
            <person name="Nakajima M."/>
            <person name="Narusaka M."/>
            <person name="Seki M."/>
            <person name="Sakurai T."/>
            <person name="Satou M."/>
            <person name="Tamse R."/>
            <person name="Vaysberg M."/>
            <person name="Wallender E.K."/>
            <person name="Wong C."/>
            <person name="Yamamura Y."/>
            <person name="Yuan S."/>
            <person name="Shinozaki K."/>
            <person name="Davis R.W."/>
            <person name="Theologis A."/>
            <person name="Ecker J.R."/>
        </authorList>
    </citation>
    <scope>NUCLEOTIDE SEQUENCE [LARGE SCALE MRNA]</scope>
    <source>
        <strain>cv. Columbia</strain>
    </source>
</reference>
<reference key="4">
    <citation type="submission" date="2006-07" db="EMBL/GenBank/DDBJ databases">
        <title>Large-scale analysis of RIKEN Arabidopsis full-length (RAFL) cDNAs.</title>
        <authorList>
            <person name="Totoki Y."/>
            <person name="Seki M."/>
            <person name="Ishida J."/>
            <person name="Nakajima M."/>
            <person name="Enju A."/>
            <person name="Kamiya A."/>
            <person name="Narusaka M."/>
            <person name="Shin-i T."/>
            <person name="Nakagawa M."/>
            <person name="Sakamoto N."/>
            <person name="Oishi K."/>
            <person name="Kohara Y."/>
            <person name="Kobayashi M."/>
            <person name="Toyoda A."/>
            <person name="Sakaki Y."/>
            <person name="Sakurai T."/>
            <person name="Iida K."/>
            <person name="Akiyama K."/>
            <person name="Satou M."/>
            <person name="Toyoda T."/>
            <person name="Konagaya A."/>
            <person name="Carninci P."/>
            <person name="Kawai J."/>
            <person name="Hayashizaki Y."/>
            <person name="Shinozaki K."/>
        </authorList>
    </citation>
    <scope>NUCLEOTIDE SEQUENCE [LARGE SCALE MRNA]</scope>
    <source>
        <strain>cv. Columbia</strain>
    </source>
</reference>
<reference key="5">
    <citation type="journal article" date="1995" name="Proc. Natl. Acad. Sci. U.S.A.">
        <title>Seed and vascular expression of a high-affinity transporter for cationic amino acids in Arabidopsis.</title>
        <authorList>
            <person name="Frommer W.B."/>
            <person name="Hummel S."/>
            <person name="Unseld M."/>
            <person name="Ninnemann O."/>
        </authorList>
    </citation>
    <scope>NUCLEOTIDE SEQUENCE [GENOMIC DNA] OF 1-76</scope>
    <scope>FUNCTION</scope>
    <scope>TISSUE SPECIFICITY</scope>
    <scope>BIOPHYSICOCHEMICAL PROPERTIES</scope>
    <scope>ACTIVITY REGULATION</scope>
    <source>
        <strain>cv. C24</strain>
        <tissue>Leaf</tissue>
    </source>
</reference>
<reference key="6">
    <citation type="journal article" date="2004" name="Plant Physiol.">
        <title>Molecular and functional characterization of a family of amino acid transporters from Arabidopsis.</title>
        <authorList>
            <person name="Su Y.-H."/>
            <person name="Frommer W.B."/>
            <person name="Ludewig U."/>
        </authorList>
    </citation>
    <scope>FUNCTION</scope>
    <scope>SUBCELLULAR LOCATION</scope>
    <scope>TISSUE SPECIFICITY</scope>
    <scope>GENE FAMILY</scope>
    <scope>NOMENCLATURE</scope>
    <source>
        <strain>cv. Columbia</strain>
    </source>
</reference>
<reference key="7">
    <citation type="journal article" date="2012" name="Mol. Cell. Proteomics">
        <title>Comparative large-scale characterisation of plant vs. mammal proteins reveals similar and idiosyncratic N-alpha acetylation features.</title>
        <authorList>
            <person name="Bienvenut W.V."/>
            <person name="Sumpton D."/>
            <person name="Martinez A."/>
            <person name="Lilla S."/>
            <person name="Espagne C."/>
            <person name="Meinnel T."/>
            <person name="Giglione C."/>
        </authorList>
    </citation>
    <scope>ACETYLATION [LARGE SCALE ANALYSIS] AT ALA-2</scope>
    <scope>CLEAVAGE OF INITIATOR METHIONINE [LARGE SCALE ANALYSIS]</scope>
    <scope>IDENTIFICATION BY MASS SPECTROMETRY [LARGE SCALE ANALYSIS]</scope>
</reference>
<protein>
    <recommendedName>
        <fullName>Cationic amino acid transporter 1</fullName>
    </recommendedName>
    <alternativeName>
        <fullName>Amino acid transporter 1</fullName>
    </alternativeName>
</protein>
<name>CAAT1_ARATH</name>
<accession>Q84MA5</accession>
<accession>Q7DLY7</accession>
<accession>Q96241</accession>
<feature type="initiator methionine" description="Removed" evidence="5">
    <location>
        <position position="1"/>
    </location>
</feature>
<feature type="chain" id="PRO_0000415777" description="Cationic amino acid transporter 1">
    <location>
        <begin position="2"/>
        <end position="594"/>
    </location>
</feature>
<feature type="topological domain" description="Cytoplasmic" evidence="1">
    <location>
        <begin position="2"/>
        <end position="78"/>
    </location>
</feature>
<feature type="transmembrane region" description="Helical" evidence="1">
    <location>
        <begin position="79"/>
        <end position="99"/>
    </location>
</feature>
<feature type="topological domain" description="Extracellular" evidence="1">
    <location>
        <begin position="100"/>
        <end position="104"/>
    </location>
</feature>
<feature type="transmembrane region" description="Helical" evidence="1">
    <location>
        <begin position="105"/>
        <end position="125"/>
    </location>
</feature>
<feature type="topological domain" description="Cytoplasmic" evidence="1">
    <location>
        <begin position="126"/>
        <end position="149"/>
    </location>
</feature>
<feature type="transmembrane region" description="Helical" evidence="1">
    <location>
        <begin position="150"/>
        <end position="170"/>
    </location>
</feature>
<feature type="topological domain" description="Extracellular" evidence="1">
    <location>
        <begin position="171"/>
        <end position="201"/>
    </location>
</feature>
<feature type="transmembrane region" description="Helical" evidence="1">
    <location>
        <begin position="202"/>
        <end position="222"/>
    </location>
</feature>
<feature type="topological domain" description="Cytoplasmic" evidence="1">
    <location>
        <begin position="223"/>
        <end position="227"/>
    </location>
</feature>
<feature type="transmembrane region" description="Helical" evidence="1">
    <location>
        <begin position="228"/>
        <end position="248"/>
    </location>
</feature>
<feature type="topological domain" description="Extracellular" evidence="1">
    <location>
        <begin position="249"/>
        <end position="266"/>
    </location>
</feature>
<feature type="transmembrane region" description="Helical" evidence="1">
    <location>
        <begin position="267"/>
        <end position="287"/>
    </location>
</feature>
<feature type="topological domain" description="Cytoplasmic" evidence="1">
    <location>
        <begin position="288"/>
        <end position="297"/>
    </location>
</feature>
<feature type="transmembrane region" description="Helical" evidence="1">
    <location>
        <begin position="298"/>
        <end position="318"/>
    </location>
</feature>
<feature type="topological domain" description="Extracellular" evidence="1">
    <location>
        <begin position="319"/>
        <end position="348"/>
    </location>
</feature>
<feature type="transmembrane region" description="Helical" evidence="1">
    <location>
        <begin position="349"/>
        <end position="369"/>
    </location>
</feature>
<feature type="topological domain" description="Cytoplasmic" evidence="1">
    <location>
        <begin position="370"/>
        <end position="393"/>
    </location>
</feature>
<feature type="transmembrane region" description="Helical" evidence="1">
    <location>
        <begin position="394"/>
        <end position="414"/>
    </location>
</feature>
<feature type="topological domain" description="Extracellular" evidence="1">
    <location>
        <begin position="415"/>
        <end position="418"/>
    </location>
</feature>
<feature type="transmembrane region" description="Helical" evidence="1">
    <location>
        <begin position="419"/>
        <end position="439"/>
    </location>
</feature>
<feature type="topological domain" description="Cytoplasmic" evidence="1">
    <location>
        <begin position="440"/>
        <end position="457"/>
    </location>
</feature>
<feature type="transmembrane region" description="Helical" evidence="1">
    <location>
        <begin position="458"/>
        <end position="478"/>
    </location>
</feature>
<feature type="topological domain" description="Extracellular" evidence="1">
    <location>
        <begin position="479"/>
        <end position="483"/>
    </location>
</feature>
<feature type="transmembrane region" description="Helical" evidence="1">
    <location>
        <begin position="484"/>
        <end position="504"/>
    </location>
</feature>
<feature type="topological domain" description="Cytoplasmic" evidence="1">
    <location>
        <begin position="505"/>
        <end position="511"/>
    </location>
</feature>
<feature type="transmembrane region" description="Helical" evidence="1">
    <location>
        <begin position="512"/>
        <end position="532"/>
    </location>
</feature>
<feature type="topological domain" description="Extracellular" evidence="1">
    <location>
        <begin position="533"/>
        <end position="543"/>
    </location>
</feature>
<feature type="transmembrane region" description="Helical" evidence="1">
    <location>
        <begin position="544"/>
        <end position="564"/>
    </location>
</feature>
<feature type="topological domain" description="Cytoplasmic" evidence="1">
    <location>
        <begin position="565"/>
        <end position="594"/>
    </location>
</feature>
<feature type="modified residue" description="N-acetylalanine" evidence="5">
    <location>
        <position position="2"/>
    </location>
</feature>
<feature type="glycosylation site" description="N-linked (GlcNAc...) asparagine" evidence="1">
    <location>
        <position position="102"/>
    </location>
</feature>
<feature type="glycosylation site" description="N-linked (GlcNAc...) asparagine" evidence="1">
    <location>
        <position position="255"/>
    </location>
</feature>
<comment type="function">
    <text evidence="2 3">High-affinity permease involved in the transport of the cationic amino acids (e.g. arginine, lysine, histidine, citrulline, valine, and glutamate). Transport mostly basic amino acids, and, to a lower extent neutral and acidic amino acids. May function as a proton symporter.</text>
</comment>
<comment type="activity regulation">
    <text evidence="3">Inhibited by the protonophore 2,4-dinitrophenol.</text>
</comment>
<comment type="biophysicochemical properties">
    <kinetics>
        <KM evidence="3">35 uM for histidine (at pH 4.5)</KM>
    </kinetics>
    <phDependence>
        <text evidence="3">Optimal transport of histidine at pH 4.5-5.</text>
    </phDependence>
</comment>
<comment type="subcellular location">
    <subcellularLocation>
        <location evidence="4">Membrane</location>
        <topology evidence="4">Multi-pass membrane protein</topology>
    </subcellularLocation>
</comment>
<comment type="tissue specificity">
    <text evidence="2 3">Expressed in roots, stems, flowers, petioles, seeds, siliques, and leaves. Mostly present in major veins.</text>
</comment>
<comment type="similarity">
    <text evidence="4">Belongs to the amino acid-polyamine-organocation (APC) superfamily. Cationic amino acid transporter (CAT) (TC 2.A.3.3) family.</text>
</comment>
<comment type="sequence caution" evidence="4">
    <conflict type="erroneous initiation">
        <sequence resource="EMBL-CDS" id="CAA17531"/>
    </conflict>
    <text>Truncated N-terminus.</text>
</comment>
<comment type="sequence caution" evidence="4">
    <conflict type="erroneous gene model prediction">
        <sequence resource="EMBL-CDS" id="CAA63346"/>
    </conflict>
</comment>
<comment type="sequence caution" evidence="4">
    <conflict type="erroneous initiation">
        <sequence resource="EMBL-CDS" id="CAB79112"/>
    </conflict>
    <text>Truncated N-terminus.</text>
</comment>
<dbReference type="EMBL" id="AL021960">
    <property type="protein sequence ID" value="CAA17531.1"/>
    <property type="status" value="ALT_INIT"/>
    <property type="molecule type" value="Genomic_DNA"/>
</dbReference>
<dbReference type="EMBL" id="AL161554">
    <property type="protein sequence ID" value="CAB79112.1"/>
    <property type="status" value="ALT_INIT"/>
    <property type="molecule type" value="Genomic_DNA"/>
</dbReference>
<dbReference type="EMBL" id="CP002687">
    <property type="protein sequence ID" value="AEE84405.1"/>
    <property type="molecule type" value="Genomic_DNA"/>
</dbReference>
<dbReference type="EMBL" id="BT006445">
    <property type="protein sequence ID" value="AAP21253.1"/>
    <property type="molecule type" value="mRNA"/>
</dbReference>
<dbReference type="EMBL" id="AK227519">
    <property type="protein sequence ID" value="BAE99519.1"/>
    <property type="molecule type" value="mRNA"/>
</dbReference>
<dbReference type="EMBL" id="X92657">
    <property type="protein sequence ID" value="CAA63346.1"/>
    <property type="status" value="ALT_SEQ"/>
    <property type="molecule type" value="Genomic_DNA"/>
</dbReference>
<dbReference type="PIR" id="S51171">
    <property type="entry name" value="S51171"/>
</dbReference>
<dbReference type="RefSeq" id="NP_193844.2">
    <property type="nucleotide sequence ID" value="NM_118231.4"/>
</dbReference>
<dbReference type="SMR" id="Q84MA5"/>
<dbReference type="BioGRID" id="13151">
    <property type="interactions" value="4"/>
</dbReference>
<dbReference type="FunCoup" id="Q84MA5">
    <property type="interactions" value="67"/>
</dbReference>
<dbReference type="IntAct" id="Q84MA5">
    <property type="interactions" value="2"/>
</dbReference>
<dbReference type="STRING" id="3702.Q84MA5"/>
<dbReference type="TCDB" id="2.A.3.3.3">
    <property type="family name" value="the amino acid-polyamine-organocation (apc) family"/>
</dbReference>
<dbReference type="GlyCosmos" id="Q84MA5">
    <property type="glycosylation" value="2 sites, No reported glycans"/>
</dbReference>
<dbReference type="GlyGen" id="Q84MA5">
    <property type="glycosylation" value="2 sites"/>
</dbReference>
<dbReference type="iPTMnet" id="Q84MA5"/>
<dbReference type="SwissPalm" id="Q84MA5"/>
<dbReference type="PaxDb" id="3702-AT4G21120.1"/>
<dbReference type="ProteomicsDB" id="239173"/>
<dbReference type="EnsemblPlants" id="AT4G21120.1">
    <property type="protein sequence ID" value="AT4G21120.1"/>
    <property type="gene ID" value="AT4G21120"/>
</dbReference>
<dbReference type="GeneID" id="827860"/>
<dbReference type="Gramene" id="AT4G21120.1">
    <property type="protein sequence ID" value="AT4G21120.1"/>
    <property type="gene ID" value="AT4G21120"/>
</dbReference>
<dbReference type="KEGG" id="ath:AT4G21120"/>
<dbReference type="Araport" id="AT4G21120"/>
<dbReference type="TAIR" id="AT4G21120">
    <property type="gene designation" value="AAT1"/>
</dbReference>
<dbReference type="eggNOG" id="KOG1286">
    <property type="taxonomic scope" value="Eukaryota"/>
</dbReference>
<dbReference type="HOGENOM" id="CLU_007946_15_9_1"/>
<dbReference type="InParanoid" id="Q84MA5"/>
<dbReference type="OMA" id="YGMEMED"/>
<dbReference type="OrthoDB" id="3900342at2759"/>
<dbReference type="PhylomeDB" id="Q84MA5"/>
<dbReference type="PRO" id="PR:Q84MA5"/>
<dbReference type="Proteomes" id="UP000006548">
    <property type="component" value="Chromosome 4"/>
</dbReference>
<dbReference type="ExpressionAtlas" id="Q84MA5">
    <property type="expression patterns" value="baseline and differential"/>
</dbReference>
<dbReference type="GO" id="GO:0016020">
    <property type="term" value="C:membrane"/>
    <property type="evidence" value="ECO:0000250"/>
    <property type="project" value="TAIR"/>
</dbReference>
<dbReference type="GO" id="GO:0005886">
    <property type="term" value="C:plasma membrane"/>
    <property type="evidence" value="ECO:0007005"/>
    <property type="project" value="TAIR"/>
</dbReference>
<dbReference type="GO" id="GO:0022857">
    <property type="term" value="F:transmembrane transporter activity"/>
    <property type="evidence" value="ECO:0007669"/>
    <property type="project" value="InterPro"/>
</dbReference>
<dbReference type="GO" id="GO:0006865">
    <property type="term" value="P:amino acid transport"/>
    <property type="evidence" value="ECO:0007669"/>
    <property type="project" value="UniProtKB-KW"/>
</dbReference>
<dbReference type="FunFam" id="1.20.1740.10:FF:000035">
    <property type="entry name" value="Cationic amino acid transporter 5"/>
    <property type="match status" value="1"/>
</dbReference>
<dbReference type="Gene3D" id="1.20.1740.10">
    <property type="entry name" value="Amino acid/polyamine transporter I"/>
    <property type="match status" value="1"/>
</dbReference>
<dbReference type="InterPro" id="IPR002293">
    <property type="entry name" value="AA/rel_permease1"/>
</dbReference>
<dbReference type="InterPro" id="IPR029485">
    <property type="entry name" value="CAT_C"/>
</dbReference>
<dbReference type="PANTHER" id="PTHR43243:SF1">
    <property type="entry name" value="CATIONIC AMINO ACID TRANSPORTER 1"/>
    <property type="match status" value="1"/>
</dbReference>
<dbReference type="PANTHER" id="PTHR43243">
    <property type="entry name" value="INNER MEMBRANE TRANSPORTER YGJI-RELATED"/>
    <property type="match status" value="1"/>
</dbReference>
<dbReference type="Pfam" id="PF13520">
    <property type="entry name" value="AA_permease_2"/>
    <property type="match status" value="1"/>
</dbReference>
<dbReference type="Pfam" id="PF13906">
    <property type="entry name" value="AA_permease_C"/>
    <property type="match status" value="1"/>
</dbReference>
<dbReference type="PIRSF" id="PIRSF006060">
    <property type="entry name" value="AA_transporter"/>
    <property type="match status" value="1"/>
</dbReference>
<proteinExistence type="evidence at protein level"/>
<evidence type="ECO:0000255" key="1"/>
<evidence type="ECO:0000269" key="2">
    <source>
    </source>
</evidence>
<evidence type="ECO:0000269" key="3">
    <source>
    </source>
</evidence>
<evidence type="ECO:0000305" key="4"/>
<evidence type="ECO:0007744" key="5">
    <source>
    </source>
</evidence>
<sequence>MASGGGDDGLRRRGCSCTKDDFLPEESFQSMGNYLKALKETPSRFMDRIMTRSLDSDEINEMKARSGHEMKKTLTWWDLMWFGIGAVIGSGIFVLTGLEARNHSGPAVVLSYVVSGVSAMLSVFCYTEFAVEIPVAGGSFAYLRVELGDFMAFIAAGNIILEYVVGGAAVARSWTSYFATLLNHKPEDFRIIVHKLGEDYSHLDPIAVGVCAIICVLAVVGTKGSSRFNYIASIIHMVVILFVIIAGFTKADVKNYSDFTPYGVRGVFKSAAVLFFAYIGFDAVSTMAEETKNPGRDIPIGLVGSMVVTTVCYCLMAVTLCLMQPYQQIDPDAPFSVAFSAVGWDWAKYIVAFGALKGMTTVLLVGAIGQARYMTHIARAHMMPPWLAQVNAKTGTPINATVVMLAATALIAFFTKLKILADLLSVSTLFIFMFVAVALLVRRYYVTGETSTRDRNKFLVFLGLILASSTATAVYWALEEEGWIGYCITVPIWFLSTVAMKFLVPQARAPKIWGVPLVPWLPSASIAINIFLLGSIDTKSFVRFAIWTGILLIYYVLFGLHATYDTAKATLKEKQALQKAEEGGVVADNSCSAT</sequence>
<organism>
    <name type="scientific">Arabidopsis thaliana</name>
    <name type="common">Mouse-ear cress</name>
    <dbReference type="NCBI Taxonomy" id="3702"/>
    <lineage>
        <taxon>Eukaryota</taxon>
        <taxon>Viridiplantae</taxon>
        <taxon>Streptophyta</taxon>
        <taxon>Embryophyta</taxon>
        <taxon>Tracheophyta</taxon>
        <taxon>Spermatophyta</taxon>
        <taxon>Magnoliopsida</taxon>
        <taxon>eudicotyledons</taxon>
        <taxon>Gunneridae</taxon>
        <taxon>Pentapetalae</taxon>
        <taxon>rosids</taxon>
        <taxon>malvids</taxon>
        <taxon>Brassicales</taxon>
        <taxon>Brassicaceae</taxon>
        <taxon>Camelineae</taxon>
        <taxon>Arabidopsis</taxon>
    </lineage>
</organism>